<keyword id="KW-0067">ATP-binding</keyword>
<keyword id="KW-0963">Cytoplasm</keyword>
<keyword id="KW-0227">DNA damage</keyword>
<keyword id="KW-0233">DNA recombination</keyword>
<keyword id="KW-0234">DNA repair</keyword>
<keyword id="KW-0238">DNA-binding</keyword>
<keyword id="KW-0378">Hydrolase</keyword>
<keyword id="KW-0547">Nucleotide-binding</keyword>
<sequence length="350" mass="38817">MIEADRLITASPREREEQQDRAIRPLKLADYIGQPGVREQMELFIQAARGRAESLDHTLIFGPPGLGKTTLANIIAQEMGVSIKSTSGPVLERPGDLAALLTNLEAGDVLFVDEIHRLSPIVEEVLYPAMEDFQLDIMIGEGPAARSIKLDLPPFTLVGATTRAGMLTNPLRDRFGIVQRLEFYGIDDLATIVTRSAGILGLPIEDQGAYEIARRARGTPRIANRLLRRVRDFAEVRGRGHITREIADQALNLLDVDERGFDHSDRRLLLAMIEKFDGGPVGVDSLAAAISEERHTIEDVLEPYLIQQGYMMRTPRGRVVTRHAYLHFGLNTPKRLGEQPSGDLFAVSDE</sequence>
<evidence type="ECO:0000255" key="1">
    <source>
        <dbReference type="HAMAP-Rule" id="MF_00016"/>
    </source>
</evidence>
<evidence type="ECO:0000256" key="2">
    <source>
        <dbReference type="SAM" id="MobiDB-lite"/>
    </source>
</evidence>
<name>RUVB_ECTM1</name>
<protein>
    <recommendedName>
        <fullName evidence="1">Holliday junction branch migration complex subunit RuvB</fullName>
        <ecNumber evidence="1">3.6.4.-</ecNumber>
    </recommendedName>
</protein>
<dbReference type="EC" id="3.6.4.-" evidence="1"/>
<dbReference type="EMBL" id="CP000680">
    <property type="protein sequence ID" value="ABP84037.1"/>
    <property type="molecule type" value="Genomic_DNA"/>
</dbReference>
<dbReference type="SMR" id="A4XRS1"/>
<dbReference type="STRING" id="399739.Pmen_1272"/>
<dbReference type="KEGG" id="pmy:Pmen_1272"/>
<dbReference type="PATRIC" id="fig|399739.8.peg.1287"/>
<dbReference type="eggNOG" id="COG2255">
    <property type="taxonomic scope" value="Bacteria"/>
</dbReference>
<dbReference type="HOGENOM" id="CLU_055599_1_0_6"/>
<dbReference type="OrthoDB" id="9804478at2"/>
<dbReference type="GO" id="GO:0005737">
    <property type="term" value="C:cytoplasm"/>
    <property type="evidence" value="ECO:0007669"/>
    <property type="project" value="UniProtKB-SubCell"/>
</dbReference>
<dbReference type="GO" id="GO:0048476">
    <property type="term" value="C:Holliday junction resolvase complex"/>
    <property type="evidence" value="ECO:0007669"/>
    <property type="project" value="UniProtKB-UniRule"/>
</dbReference>
<dbReference type="GO" id="GO:0005524">
    <property type="term" value="F:ATP binding"/>
    <property type="evidence" value="ECO:0007669"/>
    <property type="project" value="UniProtKB-UniRule"/>
</dbReference>
<dbReference type="GO" id="GO:0016887">
    <property type="term" value="F:ATP hydrolysis activity"/>
    <property type="evidence" value="ECO:0007669"/>
    <property type="project" value="InterPro"/>
</dbReference>
<dbReference type="GO" id="GO:0000400">
    <property type="term" value="F:four-way junction DNA binding"/>
    <property type="evidence" value="ECO:0007669"/>
    <property type="project" value="UniProtKB-UniRule"/>
</dbReference>
<dbReference type="GO" id="GO:0009378">
    <property type="term" value="F:four-way junction helicase activity"/>
    <property type="evidence" value="ECO:0007669"/>
    <property type="project" value="InterPro"/>
</dbReference>
<dbReference type="GO" id="GO:0006310">
    <property type="term" value="P:DNA recombination"/>
    <property type="evidence" value="ECO:0007669"/>
    <property type="project" value="UniProtKB-UniRule"/>
</dbReference>
<dbReference type="GO" id="GO:0006281">
    <property type="term" value="P:DNA repair"/>
    <property type="evidence" value="ECO:0007669"/>
    <property type="project" value="UniProtKB-UniRule"/>
</dbReference>
<dbReference type="CDD" id="cd00009">
    <property type="entry name" value="AAA"/>
    <property type="match status" value="1"/>
</dbReference>
<dbReference type="FunFam" id="1.10.10.10:FF:000086">
    <property type="entry name" value="Holliday junction ATP-dependent DNA helicase RuvB"/>
    <property type="match status" value="1"/>
</dbReference>
<dbReference type="FunFam" id="1.10.8.60:FF:000023">
    <property type="entry name" value="Holliday junction ATP-dependent DNA helicase RuvB"/>
    <property type="match status" value="1"/>
</dbReference>
<dbReference type="FunFam" id="3.40.50.300:FF:000073">
    <property type="entry name" value="Holliday junction ATP-dependent DNA helicase RuvB"/>
    <property type="match status" value="1"/>
</dbReference>
<dbReference type="Gene3D" id="1.10.8.60">
    <property type="match status" value="1"/>
</dbReference>
<dbReference type="Gene3D" id="3.40.50.300">
    <property type="entry name" value="P-loop containing nucleotide triphosphate hydrolases"/>
    <property type="match status" value="1"/>
</dbReference>
<dbReference type="Gene3D" id="1.10.10.10">
    <property type="entry name" value="Winged helix-like DNA-binding domain superfamily/Winged helix DNA-binding domain"/>
    <property type="match status" value="1"/>
</dbReference>
<dbReference type="HAMAP" id="MF_00016">
    <property type="entry name" value="DNA_HJ_migration_RuvB"/>
    <property type="match status" value="1"/>
</dbReference>
<dbReference type="InterPro" id="IPR003593">
    <property type="entry name" value="AAA+_ATPase"/>
</dbReference>
<dbReference type="InterPro" id="IPR041445">
    <property type="entry name" value="AAA_lid_4"/>
</dbReference>
<dbReference type="InterPro" id="IPR004605">
    <property type="entry name" value="DNA_helicase_Holl-junc_RuvB"/>
</dbReference>
<dbReference type="InterPro" id="IPR027417">
    <property type="entry name" value="P-loop_NTPase"/>
</dbReference>
<dbReference type="InterPro" id="IPR008824">
    <property type="entry name" value="RuvB-like_N"/>
</dbReference>
<dbReference type="InterPro" id="IPR008823">
    <property type="entry name" value="RuvB_C"/>
</dbReference>
<dbReference type="InterPro" id="IPR036388">
    <property type="entry name" value="WH-like_DNA-bd_sf"/>
</dbReference>
<dbReference type="InterPro" id="IPR036390">
    <property type="entry name" value="WH_DNA-bd_sf"/>
</dbReference>
<dbReference type="NCBIfam" id="NF000868">
    <property type="entry name" value="PRK00080.1"/>
    <property type="match status" value="1"/>
</dbReference>
<dbReference type="NCBIfam" id="TIGR00635">
    <property type="entry name" value="ruvB"/>
    <property type="match status" value="1"/>
</dbReference>
<dbReference type="PANTHER" id="PTHR42848">
    <property type="match status" value="1"/>
</dbReference>
<dbReference type="PANTHER" id="PTHR42848:SF1">
    <property type="entry name" value="HOLLIDAY JUNCTION BRANCH MIGRATION COMPLEX SUBUNIT RUVB"/>
    <property type="match status" value="1"/>
</dbReference>
<dbReference type="Pfam" id="PF17864">
    <property type="entry name" value="AAA_lid_4"/>
    <property type="match status" value="1"/>
</dbReference>
<dbReference type="Pfam" id="PF05491">
    <property type="entry name" value="RuvB_C"/>
    <property type="match status" value="1"/>
</dbReference>
<dbReference type="Pfam" id="PF05496">
    <property type="entry name" value="RuvB_N"/>
    <property type="match status" value="1"/>
</dbReference>
<dbReference type="SMART" id="SM00382">
    <property type="entry name" value="AAA"/>
    <property type="match status" value="1"/>
</dbReference>
<dbReference type="SUPFAM" id="SSF52540">
    <property type="entry name" value="P-loop containing nucleoside triphosphate hydrolases"/>
    <property type="match status" value="1"/>
</dbReference>
<dbReference type="SUPFAM" id="SSF46785">
    <property type="entry name" value="Winged helix' DNA-binding domain"/>
    <property type="match status" value="1"/>
</dbReference>
<feature type="chain" id="PRO_1000001449" description="Holliday junction branch migration complex subunit RuvB">
    <location>
        <begin position="1"/>
        <end position="350"/>
    </location>
</feature>
<feature type="region of interest" description="Disordered" evidence="2">
    <location>
        <begin position="1"/>
        <end position="20"/>
    </location>
</feature>
<feature type="region of interest" description="Large ATPase domain (RuvB-L)" evidence="1">
    <location>
        <begin position="4"/>
        <end position="184"/>
    </location>
</feature>
<feature type="region of interest" description="Small ATPAse domain (RuvB-S)" evidence="1">
    <location>
        <begin position="185"/>
        <end position="255"/>
    </location>
</feature>
<feature type="region of interest" description="Head domain (RuvB-H)" evidence="1">
    <location>
        <begin position="258"/>
        <end position="350"/>
    </location>
</feature>
<feature type="binding site" evidence="1">
    <location>
        <position position="23"/>
    </location>
    <ligand>
        <name>ATP</name>
        <dbReference type="ChEBI" id="CHEBI:30616"/>
    </ligand>
</feature>
<feature type="binding site" evidence="1">
    <location>
        <position position="24"/>
    </location>
    <ligand>
        <name>ATP</name>
        <dbReference type="ChEBI" id="CHEBI:30616"/>
    </ligand>
</feature>
<feature type="binding site" evidence="1">
    <location>
        <position position="65"/>
    </location>
    <ligand>
        <name>ATP</name>
        <dbReference type="ChEBI" id="CHEBI:30616"/>
    </ligand>
</feature>
<feature type="binding site" evidence="1">
    <location>
        <position position="68"/>
    </location>
    <ligand>
        <name>ATP</name>
        <dbReference type="ChEBI" id="CHEBI:30616"/>
    </ligand>
</feature>
<feature type="binding site" evidence="1">
    <location>
        <position position="69"/>
    </location>
    <ligand>
        <name>ATP</name>
        <dbReference type="ChEBI" id="CHEBI:30616"/>
    </ligand>
</feature>
<feature type="binding site" evidence="1">
    <location>
        <position position="69"/>
    </location>
    <ligand>
        <name>Mg(2+)</name>
        <dbReference type="ChEBI" id="CHEBI:18420"/>
    </ligand>
</feature>
<feature type="binding site" evidence="1">
    <location>
        <position position="70"/>
    </location>
    <ligand>
        <name>ATP</name>
        <dbReference type="ChEBI" id="CHEBI:30616"/>
    </ligand>
</feature>
<feature type="binding site" evidence="1">
    <location>
        <begin position="131"/>
        <end position="133"/>
    </location>
    <ligand>
        <name>ATP</name>
        <dbReference type="ChEBI" id="CHEBI:30616"/>
    </ligand>
</feature>
<feature type="binding site" evidence="1">
    <location>
        <position position="174"/>
    </location>
    <ligand>
        <name>ATP</name>
        <dbReference type="ChEBI" id="CHEBI:30616"/>
    </ligand>
</feature>
<feature type="binding site" evidence="1">
    <location>
        <position position="184"/>
    </location>
    <ligand>
        <name>ATP</name>
        <dbReference type="ChEBI" id="CHEBI:30616"/>
    </ligand>
</feature>
<feature type="binding site" evidence="1">
    <location>
        <position position="221"/>
    </location>
    <ligand>
        <name>ATP</name>
        <dbReference type="ChEBI" id="CHEBI:30616"/>
    </ligand>
</feature>
<feature type="binding site" evidence="1">
    <location>
        <position position="294"/>
    </location>
    <ligand>
        <name>DNA</name>
        <dbReference type="ChEBI" id="CHEBI:16991"/>
    </ligand>
</feature>
<feature type="binding site" evidence="1">
    <location>
        <position position="313"/>
    </location>
    <ligand>
        <name>DNA</name>
        <dbReference type="ChEBI" id="CHEBI:16991"/>
    </ligand>
</feature>
<feature type="binding site" evidence="1">
    <location>
        <position position="318"/>
    </location>
    <ligand>
        <name>DNA</name>
        <dbReference type="ChEBI" id="CHEBI:16991"/>
    </ligand>
</feature>
<accession>A4XRS1</accession>
<comment type="function">
    <text evidence="1">The RuvA-RuvB-RuvC complex processes Holliday junction (HJ) DNA during genetic recombination and DNA repair, while the RuvA-RuvB complex plays an important role in the rescue of blocked DNA replication forks via replication fork reversal (RFR). RuvA specifically binds to HJ cruciform DNA, conferring on it an open structure. The RuvB hexamer acts as an ATP-dependent pump, pulling dsDNA into and through the RuvAB complex. RuvB forms 2 homohexamers on either side of HJ DNA bound by 1 or 2 RuvA tetramers; 4 subunits per hexamer contact DNA at a time. Coordinated motions by a converter formed by DNA-disengaged RuvB subunits stimulates ATP hydrolysis and nucleotide exchange. Immobilization of the converter enables RuvB to convert the ATP-contained energy into a lever motion, pulling 2 nucleotides of DNA out of the RuvA tetramer per ATP hydrolyzed, thus driving DNA branch migration. The RuvB motors rotate together with the DNA substrate, which together with the progressing nucleotide cycle form the mechanistic basis for DNA recombination by continuous HJ branch migration. Branch migration allows RuvC to scan DNA until it finds its consensus sequence, where it cleaves and resolves cruciform DNA.</text>
</comment>
<comment type="catalytic activity">
    <reaction evidence="1">
        <text>ATP + H2O = ADP + phosphate + H(+)</text>
        <dbReference type="Rhea" id="RHEA:13065"/>
        <dbReference type="ChEBI" id="CHEBI:15377"/>
        <dbReference type="ChEBI" id="CHEBI:15378"/>
        <dbReference type="ChEBI" id="CHEBI:30616"/>
        <dbReference type="ChEBI" id="CHEBI:43474"/>
        <dbReference type="ChEBI" id="CHEBI:456216"/>
    </reaction>
</comment>
<comment type="subunit">
    <text evidence="1">Homohexamer. Forms an RuvA(8)-RuvB(12)-Holliday junction (HJ) complex. HJ DNA is sandwiched between 2 RuvA tetramers; dsDNA enters through RuvA and exits via RuvB. An RuvB hexamer assembles on each DNA strand where it exits the tetramer. Each RuvB hexamer is contacted by two RuvA subunits (via domain III) on 2 adjacent RuvB subunits; this complex drives branch migration. In the full resolvosome a probable DNA-RuvA(4)-RuvB(12)-RuvC(2) complex forms which resolves the HJ.</text>
</comment>
<comment type="subcellular location">
    <subcellularLocation>
        <location evidence="1">Cytoplasm</location>
    </subcellularLocation>
</comment>
<comment type="domain">
    <text evidence="1">Has 3 domains, the large (RuvB-L) and small ATPase (RuvB-S) domains and the C-terminal head (RuvB-H) domain. The head domain binds DNA, while the ATPase domains jointly bind ATP, ADP or are empty depending on the state of the subunit in the translocation cycle. During a single DNA translocation step the structure of each domain remains the same, but their relative positions change.</text>
</comment>
<comment type="similarity">
    <text evidence="1">Belongs to the RuvB family.</text>
</comment>
<reference key="1">
    <citation type="submission" date="2007-04" db="EMBL/GenBank/DDBJ databases">
        <title>Complete sequence of Pseudomonas mendocina ymp.</title>
        <authorList>
            <consortium name="US DOE Joint Genome Institute"/>
            <person name="Copeland A."/>
            <person name="Lucas S."/>
            <person name="Lapidus A."/>
            <person name="Barry K."/>
            <person name="Glavina del Rio T."/>
            <person name="Dalin E."/>
            <person name="Tice H."/>
            <person name="Pitluck S."/>
            <person name="Kiss H."/>
            <person name="Brettin T."/>
            <person name="Detter J.C."/>
            <person name="Bruce D."/>
            <person name="Han C."/>
            <person name="Schmutz J."/>
            <person name="Larimer F."/>
            <person name="Land M."/>
            <person name="Hauser L."/>
            <person name="Kyrpides N."/>
            <person name="Mikhailova N."/>
            <person name="Hersman L."/>
            <person name="Dubois J."/>
            <person name="Maurice P."/>
            <person name="Richardson P."/>
        </authorList>
    </citation>
    <scope>NUCLEOTIDE SEQUENCE [LARGE SCALE GENOMIC DNA]</scope>
    <source>
        <strain>ymp</strain>
    </source>
</reference>
<organism>
    <name type="scientific">Ectopseudomonas mendocina (strain ymp)</name>
    <name type="common">Pseudomonas mendocina</name>
    <dbReference type="NCBI Taxonomy" id="399739"/>
    <lineage>
        <taxon>Bacteria</taxon>
        <taxon>Pseudomonadati</taxon>
        <taxon>Pseudomonadota</taxon>
        <taxon>Gammaproteobacteria</taxon>
        <taxon>Pseudomonadales</taxon>
        <taxon>Pseudomonadaceae</taxon>
        <taxon>Ectopseudomonas</taxon>
    </lineage>
</organism>
<gene>
    <name evidence="1" type="primary">ruvB</name>
    <name type="ordered locus">Pmen_1272</name>
</gene>
<proteinExistence type="inferred from homology"/>